<dbReference type="EMBL" id="CP000647">
    <property type="protein sequence ID" value="ABR77945.1"/>
    <property type="molecule type" value="Genomic_DNA"/>
</dbReference>
<dbReference type="RefSeq" id="WP_004149055.1">
    <property type="nucleotide sequence ID" value="NC_009648.1"/>
</dbReference>
<dbReference type="SMR" id="A6TBH4"/>
<dbReference type="STRING" id="272620.KPN_02527"/>
<dbReference type="PaxDb" id="272620-KPN_02527"/>
<dbReference type="EnsemblBacteria" id="ABR77945">
    <property type="protein sequence ID" value="ABR77945"/>
    <property type="gene ID" value="KPN_02527"/>
</dbReference>
<dbReference type="KEGG" id="kpn:KPN_02527"/>
<dbReference type="HOGENOM" id="CLU_002755_1_2_6"/>
<dbReference type="Proteomes" id="UP000000265">
    <property type="component" value="Chromosome"/>
</dbReference>
<dbReference type="GO" id="GO:0005886">
    <property type="term" value="C:plasma membrane"/>
    <property type="evidence" value="ECO:0007669"/>
    <property type="project" value="UniProtKB-SubCell"/>
</dbReference>
<dbReference type="GO" id="GO:0042910">
    <property type="term" value="F:xenobiotic transmembrane transporter activity"/>
    <property type="evidence" value="ECO:0007669"/>
    <property type="project" value="TreeGrafter"/>
</dbReference>
<dbReference type="FunFam" id="1.20.1640.10:FF:000001">
    <property type="entry name" value="Efflux pump membrane transporter"/>
    <property type="match status" value="1"/>
</dbReference>
<dbReference type="FunFam" id="3.30.70.1430:FF:000001">
    <property type="entry name" value="Efflux pump membrane transporter"/>
    <property type="match status" value="1"/>
</dbReference>
<dbReference type="FunFam" id="3.30.2090.10:FF:000003">
    <property type="entry name" value="Multidrug resistance protein MdtB"/>
    <property type="match status" value="1"/>
</dbReference>
<dbReference type="Gene3D" id="3.30.70.1430">
    <property type="entry name" value="Multidrug efflux transporter AcrB pore domain"/>
    <property type="match status" value="2"/>
</dbReference>
<dbReference type="Gene3D" id="3.30.70.1440">
    <property type="entry name" value="Multidrug efflux transporter AcrB pore domain"/>
    <property type="match status" value="1"/>
</dbReference>
<dbReference type="Gene3D" id="3.30.70.1320">
    <property type="entry name" value="Multidrug efflux transporter AcrB pore domain like"/>
    <property type="match status" value="1"/>
</dbReference>
<dbReference type="Gene3D" id="3.30.2090.10">
    <property type="entry name" value="Multidrug efflux transporter AcrB TolC docking domain, DN and DC subdomains"/>
    <property type="match status" value="2"/>
</dbReference>
<dbReference type="Gene3D" id="1.20.1640.10">
    <property type="entry name" value="Multidrug efflux transporter AcrB transmembrane domain"/>
    <property type="match status" value="2"/>
</dbReference>
<dbReference type="HAMAP" id="MF_01423">
    <property type="entry name" value="MdtB"/>
    <property type="match status" value="1"/>
</dbReference>
<dbReference type="InterPro" id="IPR027463">
    <property type="entry name" value="AcrB_DN_DC_subdom"/>
</dbReference>
<dbReference type="InterPro" id="IPR001036">
    <property type="entry name" value="Acrflvin-R"/>
</dbReference>
<dbReference type="InterPro" id="IPR022831">
    <property type="entry name" value="Multidrug-R_MdtB"/>
</dbReference>
<dbReference type="NCBIfam" id="NF007798">
    <property type="entry name" value="PRK10503.1"/>
    <property type="match status" value="1"/>
</dbReference>
<dbReference type="NCBIfam" id="NF033617">
    <property type="entry name" value="RND_permease_2"/>
    <property type="match status" value="1"/>
</dbReference>
<dbReference type="PANTHER" id="PTHR32063">
    <property type="match status" value="1"/>
</dbReference>
<dbReference type="PANTHER" id="PTHR32063:SF21">
    <property type="entry name" value="MULTIDRUG RESISTANCE PROTEIN MDTB"/>
    <property type="match status" value="1"/>
</dbReference>
<dbReference type="Pfam" id="PF00873">
    <property type="entry name" value="ACR_tran"/>
    <property type="match status" value="1"/>
</dbReference>
<dbReference type="PRINTS" id="PR00702">
    <property type="entry name" value="ACRIFLAVINRP"/>
</dbReference>
<dbReference type="SUPFAM" id="SSF82693">
    <property type="entry name" value="Multidrug efflux transporter AcrB pore domain, PN1, PN2, PC1 and PC2 subdomains"/>
    <property type="match status" value="3"/>
</dbReference>
<dbReference type="SUPFAM" id="SSF82714">
    <property type="entry name" value="Multidrug efflux transporter AcrB TolC docking domain, DN and DC subdomains"/>
    <property type="match status" value="2"/>
</dbReference>
<dbReference type="SUPFAM" id="SSF82866">
    <property type="entry name" value="Multidrug efflux transporter AcrB transmembrane domain"/>
    <property type="match status" value="2"/>
</dbReference>
<reference key="1">
    <citation type="submission" date="2006-09" db="EMBL/GenBank/DDBJ databases">
        <authorList>
            <consortium name="The Klebsiella pneumonia Genome Sequencing Project"/>
            <person name="McClelland M."/>
            <person name="Sanderson E.K."/>
            <person name="Spieth J."/>
            <person name="Clifton W.S."/>
            <person name="Latreille P."/>
            <person name="Sabo A."/>
            <person name="Pepin K."/>
            <person name="Bhonagiri V."/>
            <person name="Porwollik S."/>
            <person name="Ali J."/>
            <person name="Wilson R.K."/>
        </authorList>
    </citation>
    <scope>NUCLEOTIDE SEQUENCE [LARGE SCALE GENOMIC DNA]</scope>
    <source>
        <strain>ATCC 700721 / MGH 78578</strain>
    </source>
</reference>
<proteinExistence type="inferred from homology"/>
<evidence type="ECO:0000255" key="1">
    <source>
        <dbReference type="HAMAP-Rule" id="MF_01423"/>
    </source>
</evidence>
<gene>
    <name evidence="1" type="primary">mdtB</name>
    <name type="ordered locus">KPN78578_24840</name>
    <name type="ORF">KPN_02527</name>
</gene>
<feature type="chain" id="PRO_1000024304" description="Multidrug resistance protein MdtB">
    <location>
        <begin position="1"/>
        <end position="1040"/>
    </location>
</feature>
<feature type="transmembrane region" description="Helical" evidence="1">
    <location>
        <begin position="16"/>
        <end position="36"/>
    </location>
</feature>
<feature type="transmembrane region" description="Helical" evidence="1">
    <location>
        <begin position="342"/>
        <end position="362"/>
    </location>
</feature>
<feature type="transmembrane region" description="Helical" evidence="1">
    <location>
        <begin position="369"/>
        <end position="389"/>
    </location>
</feature>
<feature type="transmembrane region" description="Helical" evidence="1">
    <location>
        <begin position="396"/>
        <end position="416"/>
    </location>
</feature>
<feature type="transmembrane region" description="Helical" evidence="1">
    <location>
        <begin position="440"/>
        <end position="460"/>
    </location>
</feature>
<feature type="transmembrane region" description="Helical" evidence="1">
    <location>
        <begin position="472"/>
        <end position="492"/>
    </location>
</feature>
<feature type="transmembrane region" description="Helical" evidence="1">
    <location>
        <begin position="537"/>
        <end position="557"/>
    </location>
</feature>
<feature type="transmembrane region" description="Helical" evidence="1">
    <location>
        <begin position="863"/>
        <end position="883"/>
    </location>
</feature>
<feature type="transmembrane region" description="Helical" evidence="1">
    <location>
        <begin position="888"/>
        <end position="908"/>
    </location>
</feature>
<feature type="transmembrane region" description="Helical" evidence="1">
    <location>
        <begin position="911"/>
        <end position="931"/>
    </location>
</feature>
<feature type="transmembrane region" description="Helical" evidence="1">
    <location>
        <begin position="968"/>
        <end position="988"/>
    </location>
</feature>
<feature type="transmembrane region" description="Helical" evidence="1">
    <location>
        <begin position="998"/>
        <end position="1018"/>
    </location>
</feature>
<organism>
    <name type="scientific">Klebsiella pneumoniae subsp. pneumoniae (strain ATCC 700721 / MGH 78578)</name>
    <dbReference type="NCBI Taxonomy" id="272620"/>
    <lineage>
        <taxon>Bacteria</taxon>
        <taxon>Pseudomonadati</taxon>
        <taxon>Pseudomonadota</taxon>
        <taxon>Gammaproteobacteria</taxon>
        <taxon>Enterobacterales</taxon>
        <taxon>Enterobacteriaceae</taxon>
        <taxon>Klebsiella/Raoultella group</taxon>
        <taxon>Klebsiella</taxon>
        <taxon>Klebsiella pneumoniae complex</taxon>
    </lineage>
</organism>
<keyword id="KW-0997">Cell inner membrane</keyword>
<keyword id="KW-1003">Cell membrane</keyword>
<keyword id="KW-0472">Membrane</keyword>
<keyword id="KW-0812">Transmembrane</keyword>
<keyword id="KW-1133">Transmembrane helix</keyword>
<keyword id="KW-0813">Transport</keyword>
<accession>A6TBH4</accession>
<name>MDTB_KLEP7</name>
<comment type="subunit">
    <text evidence="1">Part of a tripartite efflux system composed of MdtA, MdtB and MdtC. MdtB forms a heteromultimer with MdtC.</text>
</comment>
<comment type="subcellular location">
    <subcellularLocation>
        <location evidence="1">Cell inner membrane</location>
        <topology evidence="1">Multi-pass membrane protein</topology>
    </subcellularLocation>
</comment>
<comment type="similarity">
    <text evidence="1">Belongs to the resistance-nodulation-cell division (RND) (TC 2.A.6) family. MdtB subfamily.</text>
</comment>
<protein>
    <recommendedName>
        <fullName evidence="1">Multidrug resistance protein MdtB</fullName>
    </recommendedName>
    <alternativeName>
        <fullName evidence="1">Multidrug transporter MdtB</fullName>
    </alternativeName>
</protein>
<sequence>MQVLPPGRTGGPSRLFIMRPVATTLLMVAILLAGIIGYRFLPVSALPEVDYPTIQVVTLYPGASPDVVTSAITAPLERQFGQMSGLKQMSSQSSGGASVVTLQFQLTLPLDVAEQEVQAAINAATNLLPSDLPNPPVYSKVNPADPPIMTLAVTSSAIPMTQVEDMVETRVAQKISQVSGVGLVTLAGGQRPAVRVKLNAQAIAALGLTSETVRTAITSANVNSAKGSLDGPARAVTLSANDQMQSAEDYRRLIIAYQNGAPIRLGDVASVEQGAENSWLGAWANQQRAIVMNVQRQPGANIIDTADSIRQMLPQLTESLPKSVKVQVLSDRTTNIRASVRDTQFELMLAIALVVMIIYLFLRNVPATIIPGVAVPLSLVGTFAVMVFLDFSINNLTLMALTIATGFVVDDAIVVIENISRYIEKGEKPLAAALKGAGEIGFTIISLTFSLIAVLIPLLFMGDIVGRLFREFAVTLAVAILISAVVSLTLTPMMCARMLSHESLRKQNRFSRASERFFERVIAVYGRWLSRVLNHPWLTLGVALSTLALSIILWVFIPKGFFPIQDNGIIQGTLQAPQSVSFASMAERQRQVASIILKDPAVESLTSFVGVDGTNPALNSARLQINLKPLDERDDRVQTVISRLQQAVDGVPGVALYLQPTQDLTIDTTVSRTQYQFTLQANSLEALSTWVPPLLSRLQAQPQLADVSSDWQDKGLAAYIKVDRDSASRLGISMADVDNALYNAFGQRLISTIYTQANQYRVVLEQDTEATPGLAALENIRLTSSDGGIVPLTAIATVEQRFTPLSVNHLDQFPVTTISFNVPDNYSLGEAVEAILAAEQSLDFPTDIRTQFQGSSLAFQSALGSTVWLVVAAVVAMYIVLGVLYESFIHPITILSTLPTAGVGALLALWLAGSELDVIAIIGIILLIGIVKKNAIMMIDFALAAEREQGMPPREAIYQACLLRFRPILMTTLAALLGALPLMLSTGVGAELRRPLGIGMVGGLMLSQVLTLFTTPVIYLLFDRLSLHLKRRFPRQEEEA</sequence>